<organism>
    <name type="scientific">Actinia equina</name>
    <name type="common">Beadlet anemone</name>
    <dbReference type="NCBI Taxonomy" id="6106"/>
    <lineage>
        <taxon>Eukaryota</taxon>
        <taxon>Metazoa</taxon>
        <taxon>Cnidaria</taxon>
        <taxon>Anthozoa</taxon>
        <taxon>Hexacorallia</taxon>
        <taxon>Actiniaria</taxon>
        <taxon>Actiniidae</taxon>
        <taxon>Actinia</taxon>
    </lineage>
</organism>
<dbReference type="EMBL" id="EU124483">
    <property type="protein sequence ID" value="ABW97362.1"/>
    <property type="molecule type" value="mRNA"/>
</dbReference>
<dbReference type="GO" id="GO:0005576">
    <property type="term" value="C:extracellular region"/>
    <property type="evidence" value="ECO:0007669"/>
    <property type="project" value="UniProtKB-SubCell"/>
</dbReference>
<dbReference type="GO" id="GO:0042151">
    <property type="term" value="C:nematocyst"/>
    <property type="evidence" value="ECO:0007669"/>
    <property type="project" value="UniProtKB-SubCell"/>
</dbReference>
<dbReference type="GO" id="GO:0017080">
    <property type="term" value="F:sodium channel regulator activity"/>
    <property type="evidence" value="ECO:0007669"/>
    <property type="project" value="UniProtKB-KW"/>
</dbReference>
<dbReference type="GO" id="GO:0090729">
    <property type="term" value="F:toxin activity"/>
    <property type="evidence" value="ECO:0007669"/>
    <property type="project" value="UniProtKB-KW"/>
</dbReference>
<dbReference type="Gene3D" id="2.20.20.10">
    <property type="entry name" value="Anthopleurin-A"/>
    <property type="match status" value="1"/>
</dbReference>
<dbReference type="InterPro" id="IPR023355">
    <property type="entry name" value="Myo_ane_neurotoxin_sf"/>
</dbReference>
<dbReference type="Pfam" id="PF00706">
    <property type="entry name" value="Toxin_4"/>
    <property type="match status" value="1"/>
</dbReference>
<dbReference type="SUPFAM" id="SSF57392">
    <property type="entry name" value="Defensin-like"/>
    <property type="match status" value="1"/>
</dbReference>
<keyword id="KW-0165">Cleavage on pair of basic residues</keyword>
<keyword id="KW-1015">Disulfide bond</keyword>
<keyword id="KW-0872">Ion channel impairing toxin</keyword>
<keyword id="KW-0166">Nematocyst</keyword>
<keyword id="KW-0528">Neurotoxin</keyword>
<keyword id="KW-0964">Secreted</keyword>
<keyword id="KW-0732">Signal</keyword>
<keyword id="KW-0800">Toxin</keyword>
<keyword id="KW-0738">Voltage-gated sodium channel impairing toxin</keyword>
<name>NA141_ACTEQ</name>
<accession>B1NWU6</accession>
<feature type="signal peptide" evidence="3">
    <location>
        <begin position="1"/>
        <end position="19"/>
    </location>
</feature>
<feature type="propeptide" id="PRO_0000433579" evidence="2">
    <location>
        <begin position="20"/>
        <end position="25"/>
    </location>
</feature>
<feature type="chain" id="PRO_5000319690" description="Delta-actitoxin-Aeq2d">
    <location>
        <begin position="28"/>
        <end position="81"/>
    </location>
</feature>
<feature type="disulfide bond" evidence="1">
    <location>
        <begin position="31"/>
        <end position="78"/>
    </location>
</feature>
<feature type="disulfide bond" evidence="1">
    <location>
        <begin position="33"/>
        <end position="68"/>
    </location>
</feature>
<feature type="disulfide bond" evidence="1">
    <location>
        <begin position="61"/>
        <end position="79"/>
    </location>
</feature>
<proteinExistence type="inferred from homology"/>
<protein>
    <recommendedName>
        <fullName evidence="5">Delta-actitoxin-Aeq2d</fullName>
        <shortName evidence="5">Delta-AITX-Aeq2d</shortName>
    </recommendedName>
    <alternativeName>
        <fullName evidence="4">Ae4-1</fullName>
    </alternativeName>
    <alternativeName>
        <fullName evidence="7">Neurotoxin 4-1</fullName>
    </alternativeName>
</protein>
<evidence type="ECO:0000250" key="1">
    <source>
        <dbReference type="UniProtKB" id="P01530"/>
    </source>
</evidence>
<evidence type="ECO:0000250" key="2">
    <source>
        <dbReference type="UniProtKB" id="Q9NJQ2"/>
    </source>
</evidence>
<evidence type="ECO:0000255" key="3"/>
<evidence type="ECO:0000303" key="4">
    <source>
    </source>
</evidence>
<evidence type="ECO:0000303" key="5">
    <source>
    </source>
</evidence>
<evidence type="ECO:0000305" key="6"/>
<evidence type="ECO:0000312" key="7">
    <source>
        <dbReference type="EMBL" id="ABW97362.1"/>
    </source>
</evidence>
<reference key="1">
    <citation type="journal article" date="2008" name="Mol. Biol. Evol.">
        <title>Concerted evolution of sea anemone neurotoxin genes is revealed through analysis of the Nematostella vectensis genome.</title>
        <authorList>
            <person name="Moran Y."/>
            <person name="Weinberger H."/>
            <person name="Sullivan J.C."/>
            <person name="Reitzel A.M."/>
            <person name="Finnerty J.R."/>
            <person name="Gurevitz M."/>
        </authorList>
    </citation>
    <scope>NUCLEOTIDE SEQUENCE [MRNA]</scope>
</reference>
<reference key="2">
    <citation type="journal article" date="2012" name="Toxicon">
        <title>Development of a rational nomenclature for naming peptide and protein toxins from sea anemones.</title>
        <authorList>
            <person name="Oliveira J.S."/>
            <person name="Fuentes-Silva D."/>
            <person name="King G.F."/>
        </authorList>
    </citation>
    <scope>NOMENCLATURE</scope>
</reference>
<comment type="function">
    <text evidence="2">Binds specifically to voltage-gated sodium channels (Nav), thereby delaying their inactivation during signal transduction. Causes death to crabs.</text>
</comment>
<comment type="subcellular location">
    <subcellularLocation>
        <location evidence="6">Secreted</location>
    </subcellularLocation>
    <subcellularLocation>
        <location evidence="6">Nematocyst</location>
    </subcellularLocation>
</comment>
<comment type="similarity">
    <text evidence="6">Belongs to the sea anemone sodium channel inhibitory toxin family. Type I subfamily.</text>
</comment>
<sequence>MNRLMILVFAAVILALASADDVDIAKRGVPCLCVSDGPRPRGNNLSGTIWMKTGGYGGNGCPKGWHFCGKSRGLLSDCCKQ</sequence>